<organism>
    <name type="scientific">Streptococcus pneumoniae (strain JJA)</name>
    <dbReference type="NCBI Taxonomy" id="488222"/>
    <lineage>
        <taxon>Bacteria</taxon>
        <taxon>Bacillati</taxon>
        <taxon>Bacillota</taxon>
        <taxon>Bacilli</taxon>
        <taxon>Lactobacillales</taxon>
        <taxon>Streptococcaceae</taxon>
        <taxon>Streptococcus</taxon>
    </lineage>
</organism>
<sequence length="180" mass="19774">MANRLKEKYLNEVVPALTEQFNYSSVMAVPKVDKIVLNMGVGEAVSNAKSLEKAAEELALISGQKPLITKAKKSIAGFRLREGVAIGAKVTLRGERMYEFLDKLVSVSLPRVRDFHGVPTKSFDGRGNYTLGVKEQLIFPEINFDDVDKTRGLDIVIVTTANTDEESRALLTGLGMPFAK</sequence>
<protein>
    <recommendedName>
        <fullName evidence="1">Large ribosomal subunit protein uL5</fullName>
    </recommendedName>
    <alternativeName>
        <fullName evidence="2">50S ribosomal protein L5</fullName>
    </alternativeName>
</protein>
<proteinExistence type="inferred from homology"/>
<accession>C1CC18</accession>
<reference key="1">
    <citation type="journal article" date="2010" name="Genome Biol.">
        <title>Structure and dynamics of the pan-genome of Streptococcus pneumoniae and closely related species.</title>
        <authorList>
            <person name="Donati C."/>
            <person name="Hiller N.L."/>
            <person name="Tettelin H."/>
            <person name="Muzzi A."/>
            <person name="Croucher N.J."/>
            <person name="Angiuoli S.V."/>
            <person name="Oggioni M."/>
            <person name="Dunning Hotopp J.C."/>
            <person name="Hu F.Z."/>
            <person name="Riley D.R."/>
            <person name="Covacci A."/>
            <person name="Mitchell T.J."/>
            <person name="Bentley S.D."/>
            <person name="Kilian M."/>
            <person name="Ehrlich G.D."/>
            <person name="Rappuoli R."/>
            <person name="Moxon E.R."/>
            <person name="Masignani V."/>
        </authorList>
    </citation>
    <scope>NUCLEOTIDE SEQUENCE [LARGE SCALE GENOMIC DNA]</scope>
    <source>
        <strain>JJA</strain>
    </source>
</reference>
<gene>
    <name evidence="1" type="primary">rplE</name>
    <name type="ordered locus">SPJ_0231</name>
</gene>
<comment type="function">
    <text evidence="1">This is one of the proteins that bind and probably mediate the attachment of the 5S RNA into the large ribosomal subunit, where it forms part of the central protuberance. In the 70S ribosome it contacts protein S13 of the 30S subunit (bridge B1b), connecting the 2 subunits; this bridge is implicated in subunit movement. Contacts the P site tRNA; the 5S rRNA and some of its associated proteins might help stabilize positioning of ribosome-bound tRNAs.</text>
</comment>
<comment type="subunit">
    <text evidence="1">Part of the 50S ribosomal subunit; part of the 5S rRNA/L5/L18/L25 subcomplex. Contacts the 5S rRNA and the P site tRNA. Forms a bridge to the 30S subunit in the 70S ribosome.</text>
</comment>
<comment type="similarity">
    <text evidence="1">Belongs to the universal ribosomal protein uL5 family.</text>
</comment>
<keyword id="KW-0687">Ribonucleoprotein</keyword>
<keyword id="KW-0689">Ribosomal protein</keyword>
<keyword id="KW-0694">RNA-binding</keyword>
<keyword id="KW-0699">rRNA-binding</keyword>
<keyword id="KW-0820">tRNA-binding</keyword>
<evidence type="ECO:0000255" key="1">
    <source>
        <dbReference type="HAMAP-Rule" id="MF_01333"/>
    </source>
</evidence>
<evidence type="ECO:0000305" key="2"/>
<feature type="chain" id="PRO_1000166153" description="Large ribosomal subunit protein uL5">
    <location>
        <begin position="1"/>
        <end position="180"/>
    </location>
</feature>
<dbReference type="EMBL" id="CP000919">
    <property type="protein sequence ID" value="ACO18671.1"/>
    <property type="molecule type" value="Genomic_DNA"/>
</dbReference>
<dbReference type="RefSeq" id="WP_000013542.1">
    <property type="nucleotide sequence ID" value="NC_012466.1"/>
</dbReference>
<dbReference type="SMR" id="C1CC18"/>
<dbReference type="GeneID" id="93738969"/>
<dbReference type="KEGG" id="sjj:SPJ_0231"/>
<dbReference type="HOGENOM" id="CLU_061015_2_1_9"/>
<dbReference type="Proteomes" id="UP000002206">
    <property type="component" value="Chromosome"/>
</dbReference>
<dbReference type="GO" id="GO:1990904">
    <property type="term" value="C:ribonucleoprotein complex"/>
    <property type="evidence" value="ECO:0007669"/>
    <property type="project" value="UniProtKB-KW"/>
</dbReference>
<dbReference type="GO" id="GO:0005840">
    <property type="term" value="C:ribosome"/>
    <property type="evidence" value="ECO:0007669"/>
    <property type="project" value="UniProtKB-KW"/>
</dbReference>
<dbReference type="GO" id="GO:0019843">
    <property type="term" value="F:rRNA binding"/>
    <property type="evidence" value="ECO:0007669"/>
    <property type="project" value="UniProtKB-UniRule"/>
</dbReference>
<dbReference type="GO" id="GO:0003735">
    <property type="term" value="F:structural constituent of ribosome"/>
    <property type="evidence" value="ECO:0007669"/>
    <property type="project" value="InterPro"/>
</dbReference>
<dbReference type="GO" id="GO:0000049">
    <property type="term" value="F:tRNA binding"/>
    <property type="evidence" value="ECO:0007669"/>
    <property type="project" value="UniProtKB-UniRule"/>
</dbReference>
<dbReference type="GO" id="GO:0006412">
    <property type="term" value="P:translation"/>
    <property type="evidence" value="ECO:0007669"/>
    <property type="project" value="UniProtKB-UniRule"/>
</dbReference>
<dbReference type="FunFam" id="3.30.1440.10:FF:000001">
    <property type="entry name" value="50S ribosomal protein L5"/>
    <property type="match status" value="1"/>
</dbReference>
<dbReference type="Gene3D" id="3.30.1440.10">
    <property type="match status" value="1"/>
</dbReference>
<dbReference type="HAMAP" id="MF_01333_B">
    <property type="entry name" value="Ribosomal_uL5_B"/>
    <property type="match status" value="1"/>
</dbReference>
<dbReference type="InterPro" id="IPR002132">
    <property type="entry name" value="Ribosomal_uL5"/>
</dbReference>
<dbReference type="InterPro" id="IPR020930">
    <property type="entry name" value="Ribosomal_uL5_bac-type"/>
</dbReference>
<dbReference type="InterPro" id="IPR031309">
    <property type="entry name" value="Ribosomal_uL5_C"/>
</dbReference>
<dbReference type="InterPro" id="IPR020929">
    <property type="entry name" value="Ribosomal_uL5_CS"/>
</dbReference>
<dbReference type="InterPro" id="IPR022803">
    <property type="entry name" value="Ribosomal_uL5_dom_sf"/>
</dbReference>
<dbReference type="InterPro" id="IPR031310">
    <property type="entry name" value="Ribosomal_uL5_N"/>
</dbReference>
<dbReference type="NCBIfam" id="NF000585">
    <property type="entry name" value="PRK00010.1"/>
    <property type="match status" value="1"/>
</dbReference>
<dbReference type="PANTHER" id="PTHR11994">
    <property type="entry name" value="60S RIBOSOMAL PROTEIN L11-RELATED"/>
    <property type="match status" value="1"/>
</dbReference>
<dbReference type="Pfam" id="PF00281">
    <property type="entry name" value="Ribosomal_L5"/>
    <property type="match status" value="1"/>
</dbReference>
<dbReference type="Pfam" id="PF00673">
    <property type="entry name" value="Ribosomal_L5_C"/>
    <property type="match status" value="1"/>
</dbReference>
<dbReference type="PIRSF" id="PIRSF002161">
    <property type="entry name" value="Ribosomal_L5"/>
    <property type="match status" value="1"/>
</dbReference>
<dbReference type="SUPFAM" id="SSF55282">
    <property type="entry name" value="RL5-like"/>
    <property type="match status" value="1"/>
</dbReference>
<dbReference type="PROSITE" id="PS00358">
    <property type="entry name" value="RIBOSOMAL_L5"/>
    <property type="match status" value="1"/>
</dbReference>
<name>RL5_STRZJ</name>